<protein>
    <recommendedName>
        <fullName>UPF0304 protein YfbU</fullName>
    </recommendedName>
</protein>
<reference key="1">
    <citation type="journal article" date="1997" name="Science">
        <title>The complete genome sequence of Escherichia coli K-12.</title>
        <authorList>
            <person name="Blattner F.R."/>
            <person name="Plunkett G. III"/>
            <person name="Bloch C.A."/>
            <person name="Perna N.T."/>
            <person name="Burland V."/>
            <person name="Riley M."/>
            <person name="Collado-Vides J."/>
            <person name="Glasner J.D."/>
            <person name="Rode C.K."/>
            <person name="Mayhew G.F."/>
            <person name="Gregor J."/>
            <person name="Davis N.W."/>
            <person name="Kirkpatrick H.A."/>
            <person name="Goeden M.A."/>
            <person name="Rose D.J."/>
            <person name="Mau B."/>
            <person name="Shao Y."/>
        </authorList>
    </citation>
    <scope>NUCLEOTIDE SEQUENCE [LARGE SCALE GENOMIC DNA]</scope>
    <source>
        <strain>K12 / MG1655 / ATCC 47076</strain>
    </source>
</reference>
<reference key="2">
    <citation type="journal article" date="2006" name="Mol. Syst. Biol.">
        <title>Highly accurate genome sequences of Escherichia coli K-12 strains MG1655 and W3110.</title>
        <authorList>
            <person name="Hayashi K."/>
            <person name="Morooka N."/>
            <person name="Yamamoto Y."/>
            <person name="Fujita K."/>
            <person name="Isono K."/>
            <person name="Choi S."/>
            <person name="Ohtsubo E."/>
            <person name="Baba T."/>
            <person name="Wanner B.L."/>
            <person name="Mori H."/>
            <person name="Horiuchi T."/>
        </authorList>
    </citation>
    <scope>NUCLEOTIDE SEQUENCE [LARGE SCALE GENOMIC DNA]</scope>
    <source>
        <strain>K12 / W3110 / ATCC 27325 / DSM 5911</strain>
    </source>
</reference>
<reference key="3">
    <citation type="journal article" date="1999" name="Electrophoresis">
        <title>Enrichment of low abundance proteins of Escherichia coli by hydroxyapatite chromatography.</title>
        <authorList>
            <person name="Fountoulakis M."/>
            <person name="Takacs M.-F."/>
            <person name="Berndt P."/>
            <person name="Langen H."/>
            <person name="Takacs B."/>
        </authorList>
    </citation>
    <scope>IDENTIFICATION BY MASS SPECTROMETRY</scope>
    <source>
        <strain>B / BL21</strain>
    </source>
</reference>
<reference key="4">
    <citation type="journal article" date="2011" name="Cell">
        <title>Selective translation of leaderless mRNAs by specialized ribosomes generated by MazF in Escherichia coli.</title>
        <authorList>
            <person name="Vesper O."/>
            <person name="Amitai S."/>
            <person name="Belitsky M."/>
            <person name="Byrgazov K."/>
            <person name="Kaberdina A.C."/>
            <person name="Engelberg-Kulka H."/>
            <person name="Moll I."/>
        </authorList>
    </citation>
    <scope>INDUCTION</scope>
    <source>
        <strain>K12 / MC4100 / ATCC 35695 / DSM 6574</strain>
    </source>
</reference>
<dbReference type="EMBL" id="U00096">
    <property type="protein sequence ID" value="AAC75354.2"/>
    <property type="molecule type" value="Genomic_DNA"/>
</dbReference>
<dbReference type="EMBL" id="AP009048">
    <property type="protein sequence ID" value="BAE76685.1"/>
    <property type="molecule type" value="Genomic_DNA"/>
</dbReference>
<dbReference type="RefSeq" id="NP_416797.2">
    <property type="nucleotide sequence ID" value="NC_000913.3"/>
</dbReference>
<dbReference type="RefSeq" id="WP_000426124.1">
    <property type="nucleotide sequence ID" value="NZ_STEB01000008.1"/>
</dbReference>
<dbReference type="SMR" id="P0A8W8"/>
<dbReference type="BioGRID" id="4262966">
    <property type="interactions" value="33"/>
</dbReference>
<dbReference type="DIP" id="DIP-48184N"/>
<dbReference type="FunCoup" id="P0A8W8">
    <property type="interactions" value="141"/>
</dbReference>
<dbReference type="IntAct" id="P0A8W8">
    <property type="interactions" value="11"/>
</dbReference>
<dbReference type="STRING" id="511145.b2294"/>
<dbReference type="jPOST" id="P0A8W8"/>
<dbReference type="PaxDb" id="511145-b2294"/>
<dbReference type="EnsemblBacteria" id="AAC75354">
    <property type="protein sequence ID" value="AAC75354"/>
    <property type="gene ID" value="b2294"/>
</dbReference>
<dbReference type="GeneID" id="946767"/>
<dbReference type="KEGG" id="ecj:JW2291"/>
<dbReference type="KEGG" id="eco:b2294"/>
<dbReference type="KEGG" id="ecoc:C3026_12795"/>
<dbReference type="PATRIC" id="fig|511145.12.peg.2388"/>
<dbReference type="EchoBASE" id="EB3858"/>
<dbReference type="eggNOG" id="COG3013">
    <property type="taxonomic scope" value="Bacteria"/>
</dbReference>
<dbReference type="HOGENOM" id="CLU_101021_1_0_6"/>
<dbReference type="InParanoid" id="P0A8W8"/>
<dbReference type="OMA" id="MYHALQV"/>
<dbReference type="OrthoDB" id="5589463at2"/>
<dbReference type="PhylomeDB" id="P0A8W8"/>
<dbReference type="BioCyc" id="EcoCyc:G7188-MONOMER"/>
<dbReference type="PRO" id="PR:P0A8W8"/>
<dbReference type="Proteomes" id="UP000000625">
    <property type="component" value="Chromosome"/>
</dbReference>
<dbReference type="GO" id="GO:0005829">
    <property type="term" value="C:cytosol"/>
    <property type="evidence" value="ECO:0000314"/>
    <property type="project" value="EcoCyc"/>
</dbReference>
<dbReference type="GO" id="GO:0042802">
    <property type="term" value="F:identical protein binding"/>
    <property type="evidence" value="ECO:0000314"/>
    <property type="project" value="EcoCyc"/>
</dbReference>
<dbReference type="GO" id="GO:0006974">
    <property type="term" value="P:DNA damage response"/>
    <property type="evidence" value="ECO:0000315"/>
    <property type="project" value="EcoCyc"/>
</dbReference>
<dbReference type="FunFam" id="1.10.3190.10:FF:000001">
    <property type="entry name" value="UPF0304 protein YfbU"/>
    <property type="match status" value="1"/>
</dbReference>
<dbReference type="Gene3D" id="1.10.287.680">
    <property type="entry name" value="Helix hairpin bin"/>
    <property type="match status" value="1"/>
</dbReference>
<dbReference type="Gene3D" id="1.10.3190.10">
    <property type="entry name" value="yfbu gene product, domain 2"/>
    <property type="match status" value="1"/>
</dbReference>
<dbReference type="HAMAP" id="MF_00762">
    <property type="entry name" value="UPF0304"/>
    <property type="match status" value="1"/>
</dbReference>
<dbReference type="InterPro" id="IPR005587">
    <property type="entry name" value="UPF0304_YfbU"/>
</dbReference>
<dbReference type="InterPro" id="IPR023146">
    <property type="entry name" value="YfbU_alpha-helical_sf"/>
</dbReference>
<dbReference type="InterPro" id="IPR023145">
    <property type="entry name" value="YfbU_helix-hairpin_sf"/>
</dbReference>
<dbReference type="NCBIfam" id="NF003936">
    <property type="entry name" value="PRK05445.1"/>
    <property type="match status" value="1"/>
</dbReference>
<dbReference type="Pfam" id="PF03887">
    <property type="entry name" value="YfbU"/>
    <property type="match status" value="1"/>
</dbReference>
<dbReference type="PIRSF" id="PIRSF006272">
    <property type="entry name" value="UCP006272"/>
    <property type="match status" value="1"/>
</dbReference>
<dbReference type="SUPFAM" id="SSF116960">
    <property type="entry name" value="YfbU-like"/>
    <property type="match status" value="1"/>
</dbReference>
<comment type="induction">
    <text evidence="1">Only a leaderless mRNA has been detected in vivo, the first nucleotide is the beginning of the start codon.</text>
</comment>
<comment type="similarity">
    <text evidence="2">Belongs to the UPF0304 family.</text>
</comment>
<name>YFBU_ECOLI</name>
<keyword id="KW-1185">Reference proteome</keyword>
<sequence>MEMTNAQRLILSNQYKMMTMLDPANAERYRRLQTIIERGYGLQMRELDREFGELKEETCRTIIDIMEMYHALHVSWSNLQDQQSIDERRVTFLGFDAATEARYLGYVRFMVNVEGRYTHFDAGTHGFNAQTPMWEKYQRMLNVWHACPRQYHLSANEINQIINA</sequence>
<gene>
    <name type="primary">yfbU</name>
    <name type="ordered locus">b2294</name>
    <name type="ordered locus">JW2291</name>
</gene>
<organism>
    <name type="scientific">Escherichia coli (strain K12)</name>
    <dbReference type="NCBI Taxonomy" id="83333"/>
    <lineage>
        <taxon>Bacteria</taxon>
        <taxon>Pseudomonadati</taxon>
        <taxon>Pseudomonadota</taxon>
        <taxon>Gammaproteobacteria</taxon>
        <taxon>Enterobacterales</taxon>
        <taxon>Enterobacteriaceae</taxon>
        <taxon>Escherichia</taxon>
    </lineage>
</organism>
<accession>P0A8W8</accession>
<accession>P76492</accession>
<accession>Q2MAM1</accession>
<feature type="chain" id="PRO_0000218162" description="UPF0304 protein YfbU">
    <location>
        <begin position="1"/>
        <end position="164"/>
    </location>
</feature>
<proteinExistence type="evidence at protein level"/>
<evidence type="ECO:0000269" key="1">
    <source>
    </source>
</evidence>
<evidence type="ECO:0000305" key="2"/>